<proteinExistence type="inferred from homology"/>
<keyword id="KW-0143">Chaperone</keyword>
<keyword id="KW-0963">Cytoplasm</keyword>
<keyword id="KW-0346">Stress response</keyword>
<gene>
    <name evidence="1" type="primary">grpE</name>
    <name type="ordered locus">mll3220</name>
</gene>
<feature type="chain" id="PRO_0000113844" description="Protein GrpE">
    <location>
        <begin position="1"/>
        <end position="210"/>
    </location>
</feature>
<feature type="region of interest" description="Disordered" evidence="2">
    <location>
        <begin position="1"/>
        <end position="26"/>
    </location>
</feature>
<feature type="region of interest" description="Disordered" evidence="2">
    <location>
        <begin position="191"/>
        <end position="210"/>
    </location>
</feature>
<feature type="compositionally biased region" description="Basic and acidic residues" evidence="2">
    <location>
        <begin position="1"/>
        <end position="12"/>
    </location>
</feature>
<comment type="function">
    <text evidence="1">Participates actively in the response to hyperosmotic and heat shock by preventing the aggregation of stress-denatured proteins, in association with DnaK and GrpE. It is the nucleotide exchange factor for DnaK and may function as a thermosensor. Unfolded proteins bind initially to DnaJ; upon interaction with the DnaJ-bound protein, DnaK hydrolyzes its bound ATP, resulting in the formation of a stable complex. GrpE releases ADP from DnaK; ATP binding to DnaK triggers the release of the substrate protein, thus completing the reaction cycle. Several rounds of ATP-dependent interactions between DnaJ, DnaK and GrpE are required for fully efficient folding.</text>
</comment>
<comment type="subunit">
    <text evidence="1">Homodimer.</text>
</comment>
<comment type="subcellular location">
    <subcellularLocation>
        <location evidence="1">Cytoplasm</location>
    </subcellularLocation>
</comment>
<comment type="similarity">
    <text evidence="1">Belongs to the GrpE family.</text>
</comment>
<name>GRPE_RHILO</name>
<dbReference type="EMBL" id="BA000012">
    <property type="protein sequence ID" value="BAB50161.1"/>
    <property type="molecule type" value="Genomic_DNA"/>
</dbReference>
<dbReference type="RefSeq" id="WP_010911507.1">
    <property type="nucleotide sequence ID" value="NC_002678.2"/>
</dbReference>
<dbReference type="SMR" id="Q98GQ5"/>
<dbReference type="KEGG" id="mlo:mll3220"/>
<dbReference type="PATRIC" id="fig|266835.9.peg.2566"/>
<dbReference type="eggNOG" id="COG0576">
    <property type="taxonomic scope" value="Bacteria"/>
</dbReference>
<dbReference type="HOGENOM" id="CLU_057217_0_2_5"/>
<dbReference type="Proteomes" id="UP000000552">
    <property type="component" value="Chromosome"/>
</dbReference>
<dbReference type="GO" id="GO:0005737">
    <property type="term" value="C:cytoplasm"/>
    <property type="evidence" value="ECO:0007669"/>
    <property type="project" value="UniProtKB-SubCell"/>
</dbReference>
<dbReference type="GO" id="GO:0000774">
    <property type="term" value="F:adenyl-nucleotide exchange factor activity"/>
    <property type="evidence" value="ECO:0007669"/>
    <property type="project" value="InterPro"/>
</dbReference>
<dbReference type="GO" id="GO:0042803">
    <property type="term" value="F:protein homodimerization activity"/>
    <property type="evidence" value="ECO:0007669"/>
    <property type="project" value="InterPro"/>
</dbReference>
<dbReference type="GO" id="GO:0051087">
    <property type="term" value="F:protein-folding chaperone binding"/>
    <property type="evidence" value="ECO:0007669"/>
    <property type="project" value="InterPro"/>
</dbReference>
<dbReference type="GO" id="GO:0051082">
    <property type="term" value="F:unfolded protein binding"/>
    <property type="evidence" value="ECO:0007669"/>
    <property type="project" value="TreeGrafter"/>
</dbReference>
<dbReference type="GO" id="GO:0006457">
    <property type="term" value="P:protein folding"/>
    <property type="evidence" value="ECO:0007669"/>
    <property type="project" value="InterPro"/>
</dbReference>
<dbReference type="CDD" id="cd00446">
    <property type="entry name" value="GrpE"/>
    <property type="match status" value="1"/>
</dbReference>
<dbReference type="FunFam" id="2.30.22.10:FF:000001">
    <property type="entry name" value="Protein GrpE"/>
    <property type="match status" value="1"/>
</dbReference>
<dbReference type="Gene3D" id="3.90.20.20">
    <property type="match status" value="1"/>
</dbReference>
<dbReference type="Gene3D" id="2.30.22.10">
    <property type="entry name" value="Head domain of nucleotide exchange factor GrpE"/>
    <property type="match status" value="1"/>
</dbReference>
<dbReference type="HAMAP" id="MF_01151">
    <property type="entry name" value="GrpE"/>
    <property type="match status" value="1"/>
</dbReference>
<dbReference type="InterPro" id="IPR000740">
    <property type="entry name" value="GrpE"/>
</dbReference>
<dbReference type="InterPro" id="IPR013805">
    <property type="entry name" value="GrpE_coiled_coil"/>
</dbReference>
<dbReference type="InterPro" id="IPR009012">
    <property type="entry name" value="GrpE_head"/>
</dbReference>
<dbReference type="NCBIfam" id="NF010738">
    <property type="entry name" value="PRK14140.1"/>
    <property type="match status" value="1"/>
</dbReference>
<dbReference type="NCBIfam" id="NF010739">
    <property type="entry name" value="PRK14141.1"/>
    <property type="match status" value="1"/>
</dbReference>
<dbReference type="NCBIfam" id="NF010748">
    <property type="entry name" value="PRK14150.1"/>
    <property type="match status" value="1"/>
</dbReference>
<dbReference type="PANTHER" id="PTHR21237">
    <property type="entry name" value="GRPE PROTEIN"/>
    <property type="match status" value="1"/>
</dbReference>
<dbReference type="PANTHER" id="PTHR21237:SF23">
    <property type="entry name" value="GRPE PROTEIN HOMOLOG, MITOCHONDRIAL"/>
    <property type="match status" value="1"/>
</dbReference>
<dbReference type="Pfam" id="PF01025">
    <property type="entry name" value="GrpE"/>
    <property type="match status" value="1"/>
</dbReference>
<dbReference type="PRINTS" id="PR00773">
    <property type="entry name" value="GRPEPROTEIN"/>
</dbReference>
<dbReference type="SUPFAM" id="SSF58014">
    <property type="entry name" value="Coiled-coil domain of nucleotide exchange factor GrpE"/>
    <property type="match status" value="1"/>
</dbReference>
<dbReference type="SUPFAM" id="SSF51064">
    <property type="entry name" value="Head domain of nucleotide exchange factor GrpE"/>
    <property type="match status" value="1"/>
</dbReference>
<dbReference type="PROSITE" id="PS01071">
    <property type="entry name" value="GRPE"/>
    <property type="match status" value="1"/>
</dbReference>
<organism>
    <name type="scientific">Mesorhizobium japonicum (strain LMG 29417 / CECT 9101 / MAFF 303099)</name>
    <name type="common">Mesorhizobium loti (strain MAFF 303099)</name>
    <dbReference type="NCBI Taxonomy" id="266835"/>
    <lineage>
        <taxon>Bacteria</taxon>
        <taxon>Pseudomonadati</taxon>
        <taxon>Pseudomonadota</taxon>
        <taxon>Alphaproteobacteria</taxon>
        <taxon>Hyphomicrobiales</taxon>
        <taxon>Phyllobacteriaceae</taxon>
        <taxon>Mesorhizobium</taxon>
    </lineage>
</organism>
<sequence length="210" mass="22741">MSDQAKDERAPSEAEAAEANAERTEGSIDGDYEALVRLLKENEELKDRALRVAAEMENLRRRTARDVHDARTYAVANFARDMLSVSDNLRRALDAIPAEAKASGDAGFKALIEGVDLTERAMLSALERHGVKKLAPEGEKFDPNFHQAMFEVPNPDVPANTVVQVVQPGYSIGERVLRPAMVGVAKGGPKIAAEAPVEPGPVNEQAEKDA</sequence>
<evidence type="ECO:0000255" key="1">
    <source>
        <dbReference type="HAMAP-Rule" id="MF_01151"/>
    </source>
</evidence>
<evidence type="ECO:0000256" key="2">
    <source>
        <dbReference type="SAM" id="MobiDB-lite"/>
    </source>
</evidence>
<accession>Q98GQ5</accession>
<protein>
    <recommendedName>
        <fullName evidence="1">Protein GrpE</fullName>
    </recommendedName>
    <alternativeName>
        <fullName evidence="1">HSP-70 cofactor</fullName>
    </alternativeName>
</protein>
<reference key="1">
    <citation type="journal article" date="2000" name="DNA Res.">
        <title>Complete genome structure of the nitrogen-fixing symbiotic bacterium Mesorhizobium loti.</title>
        <authorList>
            <person name="Kaneko T."/>
            <person name="Nakamura Y."/>
            <person name="Sato S."/>
            <person name="Asamizu E."/>
            <person name="Kato T."/>
            <person name="Sasamoto S."/>
            <person name="Watanabe A."/>
            <person name="Idesawa K."/>
            <person name="Ishikawa A."/>
            <person name="Kawashima K."/>
            <person name="Kimura T."/>
            <person name="Kishida Y."/>
            <person name="Kiyokawa C."/>
            <person name="Kohara M."/>
            <person name="Matsumoto M."/>
            <person name="Matsuno A."/>
            <person name="Mochizuki Y."/>
            <person name="Nakayama S."/>
            <person name="Nakazaki N."/>
            <person name="Shimpo S."/>
            <person name="Sugimoto M."/>
            <person name="Takeuchi C."/>
            <person name="Yamada M."/>
            <person name="Tabata S."/>
        </authorList>
    </citation>
    <scope>NUCLEOTIDE SEQUENCE [LARGE SCALE GENOMIC DNA]</scope>
    <source>
        <strain>LMG 29417 / CECT 9101 / MAFF 303099</strain>
    </source>
</reference>